<keyword id="KW-0963">Cytoplasm</keyword>
<keyword id="KW-0520">NAD</keyword>
<keyword id="KW-0521">NADP</keyword>
<keyword id="KW-0560">Oxidoreductase</keyword>
<feature type="chain" id="PRO_0000348375" description="Glyoxylate/hydroxypyruvate reductase A">
    <location>
        <begin position="1"/>
        <end position="312"/>
    </location>
</feature>
<feature type="active site" evidence="1">
    <location>
        <position position="227"/>
    </location>
</feature>
<feature type="active site" description="Proton donor" evidence="1">
    <location>
        <position position="275"/>
    </location>
</feature>
<evidence type="ECO:0000255" key="1">
    <source>
        <dbReference type="HAMAP-Rule" id="MF_01666"/>
    </source>
</evidence>
<evidence type="ECO:0000305" key="2"/>
<comment type="function">
    <text evidence="1">Catalyzes the NADPH-dependent reduction of glyoxylate and hydroxypyruvate into glycolate and glycerate, respectively.</text>
</comment>
<comment type="catalytic activity">
    <reaction evidence="1">
        <text>glycolate + NADP(+) = glyoxylate + NADPH + H(+)</text>
        <dbReference type="Rhea" id="RHEA:10992"/>
        <dbReference type="ChEBI" id="CHEBI:15378"/>
        <dbReference type="ChEBI" id="CHEBI:29805"/>
        <dbReference type="ChEBI" id="CHEBI:36655"/>
        <dbReference type="ChEBI" id="CHEBI:57783"/>
        <dbReference type="ChEBI" id="CHEBI:58349"/>
        <dbReference type="EC" id="1.1.1.79"/>
    </reaction>
</comment>
<comment type="catalytic activity">
    <reaction evidence="1">
        <text>(R)-glycerate + NAD(+) = 3-hydroxypyruvate + NADH + H(+)</text>
        <dbReference type="Rhea" id="RHEA:17905"/>
        <dbReference type="ChEBI" id="CHEBI:15378"/>
        <dbReference type="ChEBI" id="CHEBI:16659"/>
        <dbReference type="ChEBI" id="CHEBI:17180"/>
        <dbReference type="ChEBI" id="CHEBI:57540"/>
        <dbReference type="ChEBI" id="CHEBI:57945"/>
        <dbReference type="EC" id="1.1.1.81"/>
    </reaction>
</comment>
<comment type="catalytic activity">
    <reaction evidence="1">
        <text>(R)-glycerate + NADP(+) = 3-hydroxypyruvate + NADPH + H(+)</text>
        <dbReference type="Rhea" id="RHEA:18657"/>
        <dbReference type="ChEBI" id="CHEBI:15378"/>
        <dbReference type="ChEBI" id="CHEBI:16659"/>
        <dbReference type="ChEBI" id="CHEBI:17180"/>
        <dbReference type="ChEBI" id="CHEBI:57783"/>
        <dbReference type="ChEBI" id="CHEBI:58349"/>
        <dbReference type="EC" id="1.1.1.81"/>
    </reaction>
</comment>
<comment type="subcellular location">
    <subcellularLocation>
        <location evidence="1">Cytoplasm</location>
    </subcellularLocation>
</comment>
<comment type="similarity">
    <text evidence="1">Belongs to the D-isomer specific 2-hydroxyacid dehydrogenase family. GhrA subfamily.</text>
</comment>
<comment type="sequence caution" evidence="2">
    <conflict type="erroneous initiation">
        <sequence resource="EMBL-CDS" id="ABB66619"/>
    </conflict>
</comment>
<proteinExistence type="inferred from homology"/>
<gene>
    <name evidence="1" type="primary">ghrA</name>
    <name type="ordered locus">SBO_2035</name>
</gene>
<accession>Q31Z89</accession>
<dbReference type="EC" id="1.1.1.79" evidence="1"/>
<dbReference type="EC" id="1.1.1.81" evidence="1"/>
<dbReference type="EMBL" id="CP000036">
    <property type="protein sequence ID" value="ABB66619.1"/>
    <property type="status" value="ALT_INIT"/>
    <property type="molecule type" value="Genomic_DNA"/>
</dbReference>
<dbReference type="RefSeq" id="WP_000351323.1">
    <property type="nucleotide sequence ID" value="NC_007613.1"/>
</dbReference>
<dbReference type="SMR" id="Q31Z89"/>
<dbReference type="KEGG" id="sbo:SBO_2035"/>
<dbReference type="HOGENOM" id="CLU_019796_1_0_6"/>
<dbReference type="Proteomes" id="UP000007067">
    <property type="component" value="Chromosome"/>
</dbReference>
<dbReference type="GO" id="GO:0005737">
    <property type="term" value="C:cytoplasm"/>
    <property type="evidence" value="ECO:0007669"/>
    <property type="project" value="UniProtKB-SubCell"/>
</dbReference>
<dbReference type="GO" id="GO:0030267">
    <property type="term" value="F:glyoxylate reductase (NADPH) activity"/>
    <property type="evidence" value="ECO:0007669"/>
    <property type="project" value="UniProtKB-UniRule"/>
</dbReference>
<dbReference type="GO" id="GO:0008465">
    <property type="term" value="F:hydroxypyruvate reductase (NADH) activity"/>
    <property type="evidence" value="ECO:0007669"/>
    <property type="project" value="RHEA"/>
</dbReference>
<dbReference type="GO" id="GO:0120509">
    <property type="term" value="F:hydroxypyruvate reductase (NADPH) activity"/>
    <property type="evidence" value="ECO:0007669"/>
    <property type="project" value="RHEA"/>
</dbReference>
<dbReference type="GO" id="GO:0051287">
    <property type="term" value="F:NAD binding"/>
    <property type="evidence" value="ECO:0007669"/>
    <property type="project" value="InterPro"/>
</dbReference>
<dbReference type="CDD" id="cd12164">
    <property type="entry name" value="GDH_like_2"/>
    <property type="match status" value="1"/>
</dbReference>
<dbReference type="FunFam" id="3.40.50.720:FF:000110">
    <property type="entry name" value="Glyoxylate/hydroxypyruvate reductase A"/>
    <property type="match status" value="1"/>
</dbReference>
<dbReference type="Gene3D" id="3.40.50.720">
    <property type="entry name" value="NAD(P)-binding Rossmann-like Domain"/>
    <property type="match status" value="2"/>
</dbReference>
<dbReference type="HAMAP" id="MF_01666">
    <property type="entry name" value="2_Hacid_dh_C_GhrA"/>
    <property type="match status" value="1"/>
</dbReference>
<dbReference type="InterPro" id="IPR029753">
    <property type="entry name" value="D-isomer_DH_CS"/>
</dbReference>
<dbReference type="InterPro" id="IPR006140">
    <property type="entry name" value="D-isomer_DH_NAD-bd"/>
</dbReference>
<dbReference type="InterPro" id="IPR023514">
    <property type="entry name" value="GhrA_Enterobacterales"/>
</dbReference>
<dbReference type="InterPro" id="IPR036291">
    <property type="entry name" value="NAD(P)-bd_dom_sf"/>
</dbReference>
<dbReference type="NCBIfam" id="NF012013">
    <property type="entry name" value="PRK15469.1"/>
    <property type="match status" value="1"/>
</dbReference>
<dbReference type="PANTHER" id="PTHR43333">
    <property type="entry name" value="2-HACID_DH_C DOMAIN-CONTAINING PROTEIN"/>
    <property type="match status" value="1"/>
</dbReference>
<dbReference type="PANTHER" id="PTHR43333:SF1">
    <property type="entry name" value="D-ISOMER SPECIFIC 2-HYDROXYACID DEHYDROGENASE NAD-BINDING DOMAIN-CONTAINING PROTEIN"/>
    <property type="match status" value="1"/>
</dbReference>
<dbReference type="Pfam" id="PF02826">
    <property type="entry name" value="2-Hacid_dh_C"/>
    <property type="match status" value="1"/>
</dbReference>
<dbReference type="SUPFAM" id="SSF51735">
    <property type="entry name" value="NAD(P)-binding Rossmann-fold domains"/>
    <property type="match status" value="1"/>
</dbReference>
<dbReference type="PROSITE" id="PS00671">
    <property type="entry name" value="D_2_HYDROXYACID_DH_3"/>
    <property type="match status" value="1"/>
</dbReference>
<reference key="1">
    <citation type="journal article" date="2005" name="Nucleic Acids Res.">
        <title>Genome dynamics and diversity of Shigella species, the etiologic agents of bacillary dysentery.</title>
        <authorList>
            <person name="Yang F."/>
            <person name="Yang J."/>
            <person name="Zhang X."/>
            <person name="Chen L."/>
            <person name="Jiang Y."/>
            <person name="Yan Y."/>
            <person name="Tang X."/>
            <person name="Wang J."/>
            <person name="Xiong Z."/>
            <person name="Dong J."/>
            <person name="Xue Y."/>
            <person name="Zhu Y."/>
            <person name="Xu X."/>
            <person name="Sun L."/>
            <person name="Chen S."/>
            <person name="Nie H."/>
            <person name="Peng J."/>
            <person name="Xu J."/>
            <person name="Wang Y."/>
            <person name="Yuan Z."/>
            <person name="Wen Y."/>
            <person name="Yao Z."/>
            <person name="Shen Y."/>
            <person name="Qiang B."/>
            <person name="Hou Y."/>
            <person name="Yu J."/>
            <person name="Jin Q."/>
        </authorList>
    </citation>
    <scope>NUCLEOTIDE SEQUENCE [LARGE SCALE GENOMIC DNA]</scope>
    <source>
        <strain>Sb227</strain>
    </source>
</reference>
<organism>
    <name type="scientific">Shigella boydii serotype 4 (strain Sb227)</name>
    <dbReference type="NCBI Taxonomy" id="300268"/>
    <lineage>
        <taxon>Bacteria</taxon>
        <taxon>Pseudomonadati</taxon>
        <taxon>Pseudomonadota</taxon>
        <taxon>Gammaproteobacteria</taxon>
        <taxon>Enterobacterales</taxon>
        <taxon>Enterobacteriaceae</taxon>
        <taxon>Shigella</taxon>
    </lineage>
</organism>
<protein>
    <recommendedName>
        <fullName evidence="1">Glyoxylate/hydroxypyruvate reductase A</fullName>
        <ecNumber evidence="1">1.1.1.79</ecNumber>
        <ecNumber evidence="1">1.1.1.81</ecNumber>
    </recommendedName>
    <alternativeName>
        <fullName evidence="1">2-ketoacid reductase</fullName>
    </alternativeName>
</protein>
<name>GHRA_SHIBS</name>
<sequence>MDIIFYHPTFDTQWWIEALRKAIPQARVRAWKSGDNDSADYALVWHPPVEMLAGRDLKAVFALGAGVDSILSKLQAHPEMLNPSVPLFRLEDTGMGEQMQEYAVSQVLHWFRRFDDYRIQQNSSHWQPLPEYHWEDFTIGILGAGVLGSKVAQSLQTWRFPLRCWSRTRKSWPGVQSFAGREELSAFLSQCRVLINLLPNTPETVGIINQQLLEKLPDGAYLLNLARGVHVVEDDLLAALDSGKVKGAMLDVFNREPLPPESPLWQHPRVTITPHVAAITRPAEAVEYISRTIAQLEKGERVCGQVDRARGY</sequence>